<keyword id="KW-0687">Ribonucleoprotein</keyword>
<keyword id="KW-0689">Ribosomal protein</keyword>
<reference key="1">
    <citation type="journal article" date="2007" name="PLoS Biol.">
        <title>Evolution of symbiotic bacteria in the distal human intestine.</title>
        <authorList>
            <person name="Xu J."/>
            <person name="Mahowald M.A."/>
            <person name="Ley R.E."/>
            <person name="Lozupone C.A."/>
            <person name="Hamady M."/>
            <person name="Martens E.C."/>
            <person name="Henrissat B."/>
            <person name="Coutinho P.M."/>
            <person name="Minx P."/>
            <person name="Latreille P."/>
            <person name="Cordum H."/>
            <person name="Van Brunt A."/>
            <person name="Kim K."/>
            <person name="Fulton R.S."/>
            <person name="Fulton L.A."/>
            <person name="Clifton S.W."/>
            <person name="Wilson R.K."/>
            <person name="Knight R.D."/>
            <person name="Gordon J.I."/>
        </authorList>
    </citation>
    <scope>NUCLEOTIDE SEQUENCE [LARGE SCALE GENOMIC DNA]</scope>
    <source>
        <strain>ATCC 8482 / DSM 1447 / JCM 5826 / CCUG 4940 / NBRC 14291 / NCTC 11154</strain>
    </source>
</reference>
<protein>
    <recommendedName>
        <fullName evidence="1">Small ribosomal subunit protein uS10</fullName>
    </recommendedName>
    <alternativeName>
        <fullName evidence="2">30S ribosomal protein S10</fullName>
    </alternativeName>
</protein>
<comment type="function">
    <text evidence="1">Involved in the binding of tRNA to the ribosomes.</text>
</comment>
<comment type="subunit">
    <text evidence="1">Part of the 30S ribosomal subunit.</text>
</comment>
<comment type="similarity">
    <text evidence="1">Belongs to the universal ribosomal protein uS10 family.</text>
</comment>
<dbReference type="EMBL" id="CP000139">
    <property type="protein sequence ID" value="ABR38510.1"/>
    <property type="molecule type" value="Genomic_DNA"/>
</dbReference>
<dbReference type="RefSeq" id="WP_002558075.1">
    <property type="nucleotide sequence ID" value="NZ_JANSWM010000035.1"/>
</dbReference>
<dbReference type="SMR" id="A6KYJ6"/>
<dbReference type="STRING" id="435590.BVU_0806"/>
<dbReference type="PaxDb" id="435590-BVU_0806"/>
<dbReference type="GeneID" id="93449024"/>
<dbReference type="KEGG" id="bvu:BVU_0806"/>
<dbReference type="eggNOG" id="COG0051">
    <property type="taxonomic scope" value="Bacteria"/>
</dbReference>
<dbReference type="HOGENOM" id="CLU_122625_1_3_10"/>
<dbReference type="BioCyc" id="BVUL435590:G1G59-848-MONOMER"/>
<dbReference type="Proteomes" id="UP000002861">
    <property type="component" value="Chromosome"/>
</dbReference>
<dbReference type="GO" id="GO:1990904">
    <property type="term" value="C:ribonucleoprotein complex"/>
    <property type="evidence" value="ECO:0007669"/>
    <property type="project" value="UniProtKB-KW"/>
</dbReference>
<dbReference type="GO" id="GO:0005840">
    <property type="term" value="C:ribosome"/>
    <property type="evidence" value="ECO:0007669"/>
    <property type="project" value="UniProtKB-KW"/>
</dbReference>
<dbReference type="GO" id="GO:0003735">
    <property type="term" value="F:structural constituent of ribosome"/>
    <property type="evidence" value="ECO:0007669"/>
    <property type="project" value="InterPro"/>
</dbReference>
<dbReference type="GO" id="GO:0000049">
    <property type="term" value="F:tRNA binding"/>
    <property type="evidence" value="ECO:0007669"/>
    <property type="project" value="UniProtKB-UniRule"/>
</dbReference>
<dbReference type="GO" id="GO:0006412">
    <property type="term" value="P:translation"/>
    <property type="evidence" value="ECO:0007669"/>
    <property type="project" value="UniProtKB-UniRule"/>
</dbReference>
<dbReference type="FunFam" id="3.30.70.600:FF:000003">
    <property type="entry name" value="30S ribosomal protein S10"/>
    <property type="match status" value="1"/>
</dbReference>
<dbReference type="Gene3D" id="3.30.70.600">
    <property type="entry name" value="Ribosomal protein S10 domain"/>
    <property type="match status" value="1"/>
</dbReference>
<dbReference type="HAMAP" id="MF_00508">
    <property type="entry name" value="Ribosomal_uS10"/>
    <property type="match status" value="1"/>
</dbReference>
<dbReference type="InterPro" id="IPR001848">
    <property type="entry name" value="Ribosomal_uS10"/>
</dbReference>
<dbReference type="InterPro" id="IPR018268">
    <property type="entry name" value="Ribosomal_uS10_CS"/>
</dbReference>
<dbReference type="InterPro" id="IPR027486">
    <property type="entry name" value="Ribosomal_uS10_dom"/>
</dbReference>
<dbReference type="InterPro" id="IPR036838">
    <property type="entry name" value="Ribosomal_uS10_dom_sf"/>
</dbReference>
<dbReference type="NCBIfam" id="NF001861">
    <property type="entry name" value="PRK00596.1"/>
    <property type="match status" value="1"/>
</dbReference>
<dbReference type="NCBIfam" id="TIGR01049">
    <property type="entry name" value="rpsJ_bact"/>
    <property type="match status" value="1"/>
</dbReference>
<dbReference type="PANTHER" id="PTHR11700">
    <property type="entry name" value="30S RIBOSOMAL PROTEIN S10 FAMILY MEMBER"/>
    <property type="match status" value="1"/>
</dbReference>
<dbReference type="Pfam" id="PF00338">
    <property type="entry name" value="Ribosomal_S10"/>
    <property type="match status" value="1"/>
</dbReference>
<dbReference type="PRINTS" id="PR00971">
    <property type="entry name" value="RIBOSOMALS10"/>
</dbReference>
<dbReference type="SMART" id="SM01403">
    <property type="entry name" value="Ribosomal_S10"/>
    <property type="match status" value="1"/>
</dbReference>
<dbReference type="SUPFAM" id="SSF54999">
    <property type="entry name" value="Ribosomal protein S10"/>
    <property type="match status" value="1"/>
</dbReference>
<dbReference type="PROSITE" id="PS00361">
    <property type="entry name" value="RIBOSOMAL_S10"/>
    <property type="match status" value="1"/>
</dbReference>
<evidence type="ECO:0000255" key="1">
    <source>
        <dbReference type="HAMAP-Rule" id="MF_00508"/>
    </source>
</evidence>
<evidence type="ECO:0000305" key="2"/>
<organism>
    <name type="scientific">Phocaeicola vulgatus (strain ATCC 8482 / DSM 1447 / JCM 5826 / CCUG 4940 / NBRC 14291 / NCTC 11154)</name>
    <name type="common">Bacteroides vulgatus</name>
    <dbReference type="NCBI Taxonomy" id="435590"/>
    <lineage>
        <taxon>Bacteria</taxon>
        <taxon>Pseudomonadati</taxon>
        <taxon>Bacteroidota</taxon>
        <taxon>Bacteroidia</taxon>
        <taxon>Bacteroidales</taxon>
        <taxon>Bacteroidaceae</taxon>
        <taxon>Phocaeicola</taxon>
    </lineage>
</organism>
<proteinExistence type="inferred from homology"/>
<name>RS10_PHOV8</name>
<gene>
    <name evidence="1" type="primary">rpsJ</name>
    <name type="ordered locus">BVU_0806</name>
</gene>
<sequence length="101" mass="11418">MSQKIRIKLKSYDHNLVDKSAEKIVRTVKATGAIVSGPIPLPTHKRIFTVNRSTFVNKKSREQFELSSYKRLIDIYSSTAKTVDALMKLELPSGVEVEIKV</sequence>
<accession>A6KYJ6</accession>
<feature type="chain" id="PRO_1000014988" description="Small ribosomal subunit protein uS10">
    <location>
        <begin position="1"/>
        <end position="101"/>
    </location>
</feature>